<protein>
    <recommendedName>
        <fullName>Defensin-like protein 7</fullName>
    </recommendedName>
    <alternativeName>
        <fullName>Low-molecular-weight cysteine-rich protein 75</fullName>
        <shortName>Protein LCR75</shortName>
    </alternativeName>
    <alternativeName>
        <fullName>Low-molecular-weight cysteine-rich protein 79</fullName>
        <shortName>Protein LCR79</shortName>
    </alternativeName>
</protein>
<comment type="subcellular location">
    <subcellularLocation>
        <location evidence="1">Secreted</location>
    </subcellularLocation>
</comment>
<comment type="tissue specificity">
    <text evidence="6">Expressed in stems, roots, rosette leaves and flower buds.</text>
</comment>
<comment type="similarity">
    <text evidence="7">Belongs to the DEFL family.</text>
</comment>
<organism evidence="7">
    <name type="scientific">Arabidopsis thaliana</name>
    <name type="common">Mouse-ear cress</name>
    <dbReference type="NCBI Taxonomy" id="3702"/>
    <lineage>
        <taxon>Eukaryota</taxon>
        <taxon>Viridiplantae</taxon>
        <taxon>Streptophyta</taxon>
        <taxon>Embryophyta</taxon>
        <taxon>Tracheophyta</taxon>
        <taxon>Spermatophyta</taxon>
        <taxon>Magnoliopsida</taxon>
        <taxon>eudicotyledons</taxon>
        <taxon>Gunneridae</taxon>
        <taxon>Pentapetalae</taxon>
        <taxon>rosids</taxon>
        <taxon>malvids</taxon>
        <taxon>Brassicales</taxon>
        <taxon>Brassicaceae</taxon>
        <taxon>Camelineae</taxon>
        <taxon>Arabidopsis</taxon>
    </lineage>
</organism>
<keyword id="KW-0929">Antimicrobial</keyword>
<keyword id="KW-1015">Disulfide bond</keyword>
<keyword id="KW-0295">Fungicide</keyword>
<keyword id="KW-0611">Plant defense</keyword>
<keyword id="KW-0873">Pyrrolidone carboxylic acid</keyword>
<keyword id="KW-1185">Reference proteome</keyword>
<keyword id="KW-0964">Secreted</keyword>
<keyword id="KW-0732">Signal</keyword>
<evidence type="ECO:0000250" key="1"/>
<evidence type="ECO:0000250" key="2">
    <source>
        <dbReference type="UniProtKB" id="P20230"/>
    </source>
</evidence>
<evidence type="ECO:0000250" key="3">
    <source>
        <dbReference type="UniProtKB" id="P30224"/>
    </source>
</evidence>
<evidence type="ECO:0000255" key="4"/>
<evidence type="ECO:0000269" key="5">
    <source>
    </source>
</evidence>
<evidence type="ECO:0000269" key="6">
    <source>
    </source>
</evidence>
<evidence type="ECO:0000305" key="7"/>
<reference evidence="7" key="1">
    <citation type="journal article" date="1999" name="Nature">
        <title>Sequence and analysis of chromosome 2 of the plant Arabidopsis thaliana.</title>
        <authorList>
            <person name="Lin X."/>
            <person name="Kaul S."/>
            <person name="Rounsley S.D."/>
            <person name="Shea T.P."/>
            <person name="Benito M.-I."/>
            <person name="Town C.D."/>
            <person name="Fujii C.Y."/>
            <person name="Mason T.M."/>
            <person name="Bowman C.L."/>
            <person name="Barnstead M.E."/>
            <person name="Feldblyum T.V."/>
            <person name="Buell C.R."/>
            <person name="Ketchum K.A."/>
            <person name="Lee J.J."/>
            <person name="Ronning C.M."/>
            <person name="Koo H.L."/>
            <person name="Moffat K.S."/>
            <person name="Cronin L.A."/>
            <person name="Shen M."/>
            <person name="Pai G."/>
            <person name="Van Aken S."/>
            <person name="Umayam L."/>
            <person name="Tallon L.J."/>
            <person name="Gill J.E."/>
            <person name="Adams M.D."/>
            <person name="Carrera A.J."/>
            <person name="Creasy T.H."/>
            <person name="Goodman H.M."/>
            <person name="Somerville C.R."/>
            <person name="Copenhaver G.P."/>
            <person name="Preuss D."/>
            <person name="Nierman W.C."/>
            <person name="White O."/>
            <person name="Eisen J.A."/>
            <person name="Salzberg S.L."/>
            <person name="Fraser C.M."/>
            <person name="Venter J.C."/>
        </authorList>
    </citation>
    <scope>NUCLEOTIDE SEQUENCE [LARGE SCALE GENOMIC DNA]</scope>
    <source>
        <strain evidence="5">cv. Columbia</strain>
    </source>
</reference>
<reference key="2">
    <citation type="journal article" date="2017" name="Plant J.">
        <title>Araport11: a complete reannotation of the Arabidopsis thaliana reference genome.</title>
        <authorList>
            <person name="Cheng C.Y."/>
            <person name="Krishnakumar V."/>
            <person name="Chan A.P."/>
            <person name="Thibaud-Nissen F."/>
            <person name="Schobel S."/>
            <person name="Town C.D."/>
        </authorList>
    </citation>
    <scope>GENOME REANNOTATION</scope>
    <source>
        <strain>cv. Columbia</strain>
    </source>
</reference>
<reference key="3">
    <citation type="journal article" date="2007" name="Plant J.">
        <title>Small cysteine-rich peptides resembling antimicrobial peptides have been under-predicted in plants.</title>
        <authorList>
            <person name="Silverstein K.A.T."/>
            <person name="Moskal W.A. Jr."/>
            <person name="Wu H.C."/>
            <person name="Underwood B.A."/>
            <person name="Graham M.A."/>
            <person name="Town C.D."/>
            <person name="VandenBosch K.A."/>
        </authorList>
    </citation>
    <scope>NUCLEOTIDE SEQUENCE [LARGE SCALE MRNA] OF 33-82</scope>
    <source>
        <strain>cv. Columbia</strain>
    </source>
</reference>
<reference evidence="7" key="4">
    <citation type="journal article" date="2001" name="Plant Mol. Biol.">
        <title>Two large Arabidopsis thaliana gene families are homologous to the Brassica gene superfamily that encodes pollen coat proteins and the male component of the self-incompatibility response.</title>
        <authorList>
            <person name="Vanoosthuyse V."/>
            <person name="Miege C."/>
            <person name="Dumas C."/>
            <person name="Cock J.M."/>
        </authorList>
    </citation>
    <scope>IDENTIFICATION</scope>
    <scope>TISSUE SPECIFICITY</scope>
</reference>
<reference key="5">
    <citation type="journal article" date="2005" name="Plant Physiol.">
        <title>Genome organization of more than 300 defensin-like genes in Arabidopsis.</title>
        <authorList>
            <person name="Silverstein K.A.T."/>
            <person name="Graham M.A."/>
            <person name="Paape T.D."/>
            <person name="VandenBosch K.A."/>
        </authorList>
    </citation>
    <scope>GENE FAMILY</scope>
</reference>
<proteinExistence type="evidence at transcript level"/>
<dbReference type="EMBL" id="AC006223">
    <property type="status" value="NOT_ANNOTATED_CDS"/>
    <property type="molecule type" value="Genomic_DNA"/>
</dbReference>
<dbReference type="EMBL" id="CP002685">
    <property type="status" value="NOT_ANNOTATED_CDS"/>
    <property type="molecule type" value="Genomic_DNA"/>
</dbReference>
<dbReference type="EMBL" id="EF182849">
    <property type="status" value="NOT_ANNOTATED_CDS"/>
    <property type="molecule type" value="mRNA"/>
</dbReference>
<dbReference type="SMR" id="P82784"/>
<dbReference type="PaxDb" id="3702-AT2G31957.1"/>
<dbReference type="Araport" id="AT2G31957"/>
<dbReference type="TAIR" id="AT2G31957">
    <property type="gene designation" value="LCR75"/>
</dbReference>
<dbReference type="HOGENOM" id="CLU_161668_1_2_1"/>
<dbReference type="InParanoid" id="P82784"/>
<dbReference type="PhylomeDB" id="P82784"/>
<dbReference type="PRO" id="PR:P82784"/>
<dbReference type="Proteomes" id="UP000006548">
    <property type="component" value="Chromosome 2"/>
</dbReference>
<dbReference type="ExpressionAtlas" id="P82784">
    <property type="expression patterns" value="baseline"/>
</dbReference>
<dbReference type="GO" id="GO:0005576">
    <property type="term" value="C:extracellular region"/>
    <property type="evidence" value="ECO:0007669"/>
    <property type="project" value="UniProtKB-SubCell"/>
</dbReference>
<dbReference type="GO" id="GO:0006952">
    <property type="term" value="P:defense response"/>
    <property type="evidence" value="ECO:0000318"/>
    <property type="project" value="GO_Central"/>
</dbReference>
<dbReference type="GO" id="GO:0050832">
    <property type="term" value="P:defense response to fungus"/>
    <property type="evidence" value="ECO:0007669"/>
    <property type="project" value="UniProtKB-KW"/>
</dbReference>
<dbReference type="GO" id="GO:0031640">
    <property type="term" value="P:killing of cells of another organism"/>
    <property type="evidence" value="ECO:0007669"/>
    <property type="project" value="UniProtKB-KW"/>
</dbReference>
<dbReference type="CDD" id="cd00107">
    <property type="entry name" value="Knot1"/>
    <property type="match status" value="1"/>
</dbReference>
<dbReference type="Gene3D" id="3.30.30.10">
    <property type="entry name" value="Knottin, scorpion toxin-like"/>
    <property type="match status" value="1"/>
</dbReference>
<dbReference type="InterPro" id="IPR008176">
    <property type="entry name" value="Defensin_plant"/>
</dbReference>
<dbReference type="InterPro" id="IPR003614">
    <property type="entry name" value="Scorpion_toxin-like"/>
</dbReference>
<dbReference type="InterPro" id="IPR036574">
    <property type="entry name" value="Scorpion_toxin-like_sf"/>
</dbReference>
<dbReference type="PANTHER" id="PTHR33147">
    <property type="entry name" value="DEFENSIN-LIKE PROTEIN 1"/>
    <property type="match status" value="1"/>
</dbReference>
<dbReference type="PANTHER" id="PTHR33147:SF26">
    <property type="entry name" value="DEFENSIN-LIKE PROTEIN 7-RELATED"/>
    <property type="match status" value="1"/>
</dbReference>
<dbReference type="Pfam" id="PF00304">
    <property type="entry name" value="Gamma-thionin"/>
    <property type="match status" value="1"/>
</dbReference>
<dbReference type="PRINTS" id="PR00288">
    <property type="entry name" value="PUROTHIONIN"/>
</dbReference>
<dbReference type="SMART" id="SM00505">
    <property type="entry name" value="Knot1"/>
    <property type="match status" value="1"/>
</dbReference>
<dbReference type="SUPFAM" id="SSF57095">
    <property type="entry name" value="Scorpion toxin-like"/>
    <property type="match status" value="1"/>
</dbReference>
<dbReference type="PROSITE" id="PS00940">
    <property type="entry name" value="GAMMA_THIONIN"/>
    <property type="match status" value="1"/>
</dbReference>
<feature type="signal peptide" evidence="4">
    <location>
        <begin position="1"/>
        <end position="29"/>
    </location>
</feature>
<feature type="chain" id="PRO_0000007029" description="Defensin-like protein 7">
    <location>
        <begin position="30"/>
        <end position="82"/>
    </location>
</feature>
<feature type="modified residue" description="Pyrrolidone carboxylic acid" evidence="3">
    <location>
        <position position="30"/>
    </location>
</feature>
<feature type="disulfide bond" evidence="2">
    <location>
        <begin position="33"/>
        <end position="77"/>
    </location>
</feature>
<feature type="disulfide bond" evidence="2">
    <location>
        <begin position="44"/>
        <end position="64"/>
    </location>
</feature>
<feature type="disulfide bond" evidence="2">
    <location>
        <begin position="50"/>
        <end position="71"/>
    </location>
</feature>
<feature type="disulfide bond" evidence="2">
    <location>
        <begin position="54"/>
        <end position="73"/>
    </location>
</feature>
<sequence length="82" mass="9304">MKSSTTSMQLIPTLFFLTILLASPEMVEGQQMCEAKSLDWKGMCLKWRNCRQVCISEGFTDGRCKGFTRKCICSKPCFVLPN</sequence>
<name>DEF07_ARATH</name>
<gene>
    <name type="primary">LCR75</name>
    <name type="synonym">LCR79</name>
    <name type="ordered locus">At2g31957</name>
    <name type="ORF">F22D22</name>
</gene>
<accession>P82784</accession>
<accession>P82788</accession>